<reference key="1">
    <citation type="submission" date="2007-11" db="EMBL/GenBank/DDBJ databases">
        <title>Genome sequencing of phylogenetically and phenotypically diverse Coxiella burnetii isolates.</title>
        <authorList>
            <person name="Seshadri R."/>
            <person name="Samuel J.E."/>
        </authorList>
    </citation>
    <scope>NUCLEOTIDE SEQUENCE [LARGE SCALE GENOMIC DNA]</scope>
    <source>
        <strain>RSA 331 / Henzerling II</strain>
    </source>
</reference>
<sequence>MRHYEIVILVHPDQSSQVPAMVERYQSMIKEKDGKVHRLEDWGRRQLAYSIDKVHKAHYLLMNIESDQGVISELENAFRYNDAVIRSLILKRDHAITKSSLIMQGAEKGKSSRKEKVAAEAEASEEA</sequence>
<accession>A9ND53</accession>
<gene>
    <name evidence="1" type="primary">rpsF</name>
    <name type="ordered locus">COXBURSA331_A1087</name>
</gene>
<feature type="chain" id="PRO_1000079441" description="Small ribosomal subunit protein bS6">
    <location>
        <begin position="1"/>
        <end position="127"/>
    </location>
</feature>
<feature type="region of interest" description="Disordered" evidence="2">
    <location>
        <begin position="104"/>
        <end position="127"/>
    </location>
</feature>
<feature type="compositionally biased region" description="Basic and acidic residues" evidence="2">
    <location>
        <begin position="107"/>
        <end position="119"/>
    </location>
</feature>
<keyword id="KW-0687">Ribonucleoprotein</keyword>
<keyword id="KW-0689">Ribosomal protein</keyword>
<keyword id="KW-0694">RNA-binding</keyword>
<keyword id="KW-0699">rRNA-binding</keyword>
<comment type="function">
    <text evidence="1">Binds together with bS18 to 16S ribosomal RNA.</text>
</comment>
<comment type="similarity">
    <text evidence="1">Belongs to the bacterial ribosomal protein bS6 family.</text>
</comment>
<proteinExistence type="inferred from homology"/>
<organism>
    <name type="scientific">Coxiella burnetii (strain RSA 331 / Henzerling II)</name>
    <dbReference type="NCBI Taxonomy" id="360115"/>
    <lineage>
        <taxon>Bacteria</taxon>
        <taxon>Pseudomonadati</taxon>
        <taxon>Pseudomonadota</taxon>
        <taxon>Gammaproteobacteria</taxon>
        <taxon>Legionellales</taxon>
        <taxon>Coxiellaceae</taxon>
        <taxon>Coxiella</taxon>
    </lineage>
</organism>
<evidence type="ECO:0000255" key="1">
    <source>
        <dbReference type="HAMAP-Rule" id="MF_00360"/>
    </source>
</evidence>
<evidence type="ECO:0000256" key="2">
    <source>
        <dbReference type="SAM" id="MobiDB-lite"/>
    </source>
</evidence>
<evidence type="ECO:0000305" key="3"/>
<dbReference type="EMBL" id="CP000890">
    <property type="protein sequence ID" value="ABX77732.1"/>
    <property type="molecule type" value="Genomic_DNA"/>
</dbReference>
<dbReference type="RefSeq" id="WP_010957857.1">
    <property type="nucleotide sequence ID" value="NC_010117.1"/>
</dbReference>
<dbReference type="SMR" id="A9ND53"/>
<dbReference type="KEGG" id="cbs:COXBURSA331_A1087"/>
<dbReference type="HOGENOM" id="CLU_113441_6_1_6"/>
<dbReference type="GO" id="GO:0022627">
    <property type="term" value="C:cytosolic small ribosomal subunit"/>
    <property type="evidence" value="ECO:0007669"/>
    <property type="project" value="TreeGrafter"/>
</dbReference>
<dbReference type="GO" id="GO:0070181">
    <property type="term" value="F:small ribosomal subunit rRNA binding"/>
    <property type="evidence" value="ECO:0007669"/>
    <property type="project" value="TreeGrafter"/>
</dbReference>
<dbReference type="GO" id="GO:0003735">
    <property type="term" value="F:structural constituent of ribosome"/>
    <property type="evidence" value="ECO:0007669"/>
    <property type="project" value="InterPro"/>
</dbReference>
<dbReference type="GO" id="GO:0006412">
    <property type="term" value="P:translation"/>
    <property type="evidence" value="ECO:0007669"/>
    <property type="project" value="UniProtKB-UniRule"/>
</dbReference>
<dbReference type="CDD" id="cd00473">
    <property type="entry name" value="bS6"/>
    <property type="match status" value="1"/>
</dbReference>
<dbReference type="FunFam" id="3.30.70.60:FF:000003">
    <property type="entry name" value="30S ribosomal protein S6"/>
    <property type="match status" value="1"/>
</dbReference>
<dbReference type="Gene3D" id="3.30.70.60">
    <property type="match status" value="1"/>
</dbReference>
<dbReference type="HAMAP" id="MF_00360">
    <property type="entry name" value="Ribosomal_bS6"/>
    <property type="match status" value="1"/>
</dbReference>
<dbReference type="InterPro" id="IPR000529">
    <property type="entry name" value="Ribosomal_bS6"/>
</dbReference>
<dbReference type="InterPro" id="IPR035980">
    <property type="entry name" value="Ribosomal_bS6_sf"/>
</dbReference>
<dbReference type="InterPro" id="IPR020814">
    <property type="entry name" value="Ribosomal_S6_plastid/chlpt"/>
</dbReference>
<dbReference type="InterPro" id="IPR014717">
    <property type="entry name" value="Transl_elong_EF1B/ribsomal_bS6"/>
</dbReference>
<dbReference type="NCBIfam" id="TIGR00166">
    <property type="entry name" value="S6"/>
    <property type="match status" value="1"/>
</dbReference>
<dbReference type="PANTHER" id="PTHR21011">
    <property type="entry name" value="MITOCHONDRIAL 28S RIBOSOMAL PROTEIN S6"/>
    <property type="match status" value="1"/>
</dbReference>
<dbReference type="PANTHER" id="PTHR21011:SF1">
    <property type="entry name" value="SMALL RIBOSOMAL SUBUNIT PROTEIN BS6M"/>
    <property type="match status" value="1"/>
</dbReference>
<dbReference type="Pfam" id="PF01250">
    <property type="entry name" value="Ribosomal_S6"/>
    <property type="match status" value="1"/>
</dbReference>
<dbReference type="SUPFAM" id="SSF54995">
    <property type="entry name" value="Ribosomal protein S6"/>
    <property type="match status" value="1"/>
</dbReference>
<name>RS6_COXBR</name>
<protein>
    <recommendedName>
        <fullName evidence="1">Small ribosomal subunit protein bS6</fullName>
    </recommendedName>
    <alternativeName>
        <fullName evidence="3">30S ribosomal protein S6</fullName>
    </alternativeName>
</protein>